<reference key="1">
    <citation type="submission" date="2008-08" db="EMBL/GenBank/DDBJ databases">
        <title>Complete sequence of Vibrio fischeri strain MJ11.</title>
        <authorList>
            <person name="Mandel M.J."/>
            <person name="Stabb E.V."/>
            <person name="Ruby E.G."/>
            <person name="Ferriera S."/>
            <person name="Johnson J."/>
            <person name="Kravitz S."/>
            <person name="Beeson K."/>
            <person name="Sutton G."/>
            <person name="Rogers Y.-H."/>
            <person name="Friedman R."/>
            <person name="Frazier M."/>
            <person name="Venter J.C."/>
        </authorList>
    </citation>
    <scope>NUCLEOTIDE SEQUENCE [LARGE SCALE GENOMIC DNA]</scope>
    <source>
        <strain>MJ11</strain>
    </source>
</reference>
<evidence type="ECO:0000255" key="1">
    <source>
        <dbReference type="HAMAP-Rule" id="MF_02002"/>
    </source>
</evidence>
<comment type="function">
    <text evidence="1">Catalyzes the attachment of isoleucine to tRNA(Ile). As IleRS can inadvertently accommodate and process structurally similar amino acids such as valine, to avoid such errors it has two additional distinct tRNA(Ile)-dependent editing activities. One activity is designated as 'pretransfer' editing and involves the hydrolysis of activated Val-AMP. The other activity is designated 'posttransfer' editing and involves deacylation of mischarged Val-tRNA(Ile).</text>
</comment>
<comment type="catalytic activity">
    <reaction evidence="1">
        <text>tRNA(Ile) + L-isoleucine + ATP = L-isoleucyl-tRNA(Ile) + AMP + diphosphate</text>
        <dbReference type="Rhea" id="RHEA:11060"/>
        <dbReference type="Rhea" id="RHEA-COMP:9666"/>
        <dbReference type="Rhea" id="RHEA-COMP:9695"/>
        <dbReference type="ChEBI" id="CHEBI:30616"/>
        <dbReference type="ChEBI" id="CHEBI:33019"/>
        <dbReference type="ChEBI" id="CHEBI:58045"/>
        <dbReference type="ChEBI" id="CHEBI:78442"/>
        <dbReference type="ChEBI" id="CHEBI:78528"/>
        <dbReference type="ChEBI" id="CHEBI:456215"/>
        <dbReference type="EC" id="6.1.1.5"/>
    </reaction>
</comment>
<comment type="cofactor">
    <cofactor evidence="1">
        <name>Zn(2+)</name>
        <dbReference type="ChEBI" id="CHEBI:29105"/>
    </cofactor>
    <text evidence="1">Binds 1 zinc ion per subunit.</text>
</comment>
<comment type="subunit">
    <text evidence="1">Monomer.</text>
</comment>
<comment type="subcellular location">
    <subcellularLocation>
        <location evidence="1">Cytoplasm</location>
    </subcellularLocation>
</comment>
<comment type="domain">
    <text evidence="1">IleRS has two distinct active sites: one for aminoacylation and one for editing. The misactivated valine is translocated from the active site to the editing site, which sterically excludes the correctly activated isoleucine. The single editing site contains two valyl binding pockets, one specific for each substrate (Val-AMP or Val-tRNA(Ile)).</text>
</comment>
<comment type="similarity">
    <text evidence="1">Belongs to the class-I aminoacyl-tRNA synthetase family. IleS type 1 subfamily.</text>
</comment>
<feature type="chain" id="PRO_1000189214" description="Isoleucine--tRNA ligase">
    <location>
        <begin position="1"/>
        <end position="952"/>
    </location>
</feature>
<feature type="short sequence motif" description="'HIGH' region">
    <location>
        <begin position="58"/>
        <end position="68"/>
    </location>
</feature>
<feature type="short sequence motif" description="'KMSKS' region">
    <location>
        <begin position="617"/>
        <end position="621"/>
    </location>
</feature>
<feature type="binding site" evidence="1">
    <location>
        <position position="576"/>
    </location>
    <ligand>
        <name>L-isoleucyl-5'-AMP</name>
        <dbReference type="ChEBI" id="CHEBI:178002"/>
    </ligand>
</feature>
<feature type="binding site" evidence="1">
    <location>
        <position position="620"/>
    </location>
    <ligand>
        <name>ATP</name>
        <dbReference type="ChEBI" id="CHEBI:30616"/>
    </ligand>
</feature>
<feature type="binding site" evidence="1">
    <location>
        <position position="915"/>
    </location>
    <ligand>
        <name>Zn(2+)</name>
        <dbReference type="ChEBI" id="CHEBI:29105"/>
    </ligand>
</feature>
<feature type="binding site" evidence="1">
    <location>
        <position position="918"/>
    </location>
    <ligand>
        <name>Zn(2+)</name>
        <dbReference type="ChEBI" id="CHEBI:29105"/>
    </ligand>
</feature>
<feature type="binding site" evidence="1">
    <location>
        <position position="935"/>
    </location>
    <ligand>
        <name>Zn(2+)</name>
        <dbReference type="ChEBI" id="CHEBI:29105"/>
    </ligand>
</feature>
<feature type="binding site" evidence="1">
    <location>
        <position position="938"/>
    </location>
    <ligand>
        <name>Zn(2+)</name>
        <dbReference type="ChEBI" id="CHEBI:29105"/>
    </ligand>
</feature>
<protein>
    <recommendedName>
        <fullName evidence="1">Isoleucine--tRNA ligase</fullName>
        <ecNumber evidence="1">6.1.1.5</ecNumber>
    </recommendedName>
    <alternativeName>
        <fullName evidence="1">Isoleucyl-tRNA synthetase</fullName>
        <shortName evidence="1">IleRS</shortName>
    </alternativeName>
</protein>
<proteinExistence type="inferred from homology"/>
<dbReference type="EC" id="6.1.1.5" evidence="1"/>
<dbReference type="EMBL" id="CP001139">
    <property type="protein sequence ID" value="ACH66418.1"/>
    <property type="molecule type" value="Genomic_DNA"/>
</dbReference>
<dbReference type="RefSeq" id="WP_012533712.1">
    <property type="nucleotide sequence ID" value="NC_011184.1"/>
</dbReference>
<dbReference type="SMR" id="B5FA60"/>
<dbReference type="KEGG" id="vfm:VFMJ11_0466"/>
<dbReference type="HOGENOM" id="CLU_001493_7_1_6"/>
<dbReference type="Proteomes" id="UP000001857">
    <property type="component" value="Chromosome I"/>
</dbReference>
<dbReference type="GO" id="GO:0005829">
    <property type="term" value="C:cytosol"/>
    <property type="evidence" value="ECO:0007669"/>
    <property type="project" value="TreeGrafter"/>
</dbReference>
<dbReference type="GO" id="GO:0002161">
    <property type="term" value="F:aminoacyl-tRNA deacylase activity"/>
    <property type="evidence" value="ECO:0007669"/>
    <property type="project" value="InterPro"/>
</dbReference>
<dbReference type="GO" id="GO:0005524">
    <property type="term" value="F:ATP binding"/>
    <property type="evidence" value="ECO:0007669"/>
    <property type="project" value="UniProtKB-UniRule"/>
</dbReference>
<dbReference type="GO" id="GO:0004822">
    <property type="term" value="F:isoleucine-tRNA ligase activity"/>
    <property type="evidence" value="ECO:0007669"/>
    <property type="project" value="UniProtKB-UniRule"/>
</dbReference>
<dbReference type="GO" id="GO:0000049">
    <property type="term" value="F:tRNA binding"/>
    <property type="evidence" value="ECO:0007669"/>
    <property type="project" value="InterPro"/>
</dbReference>
<dbReference type="GO" id="GO:0008270">
    <property type="term" value="F:zinc ion binding"/>
    <property type="evidence" value="ECO:0007669"/>
    <property type="project" value="UniProtKB-UniRule"/>
</dbReference>
<dbReference type="GO" id="GO:0006428">
    <property type="term" value="P:isoleucyl-tRNA aminoacylation"/>
    <property type="evidence" value="ECO:0007669"/>
    <property type="project" value="UniProtKB-UniRule"/>
</dbReference>
<dbReference type="CDD" id="cd07960">
    <property type="entry name" value="Anticodon_Ia_Ile_BEm"/>
    <property type="match status" value="1"/>
</dbReference>
<dbReference type="CDD" id="cd00818">
    <property type="entry name" value="IleRS_core"/>
    <property type="match status" value="1"/>
</dbReference>
<dbReference type="FunFam" id="1.10.730.20:FF:000001">
    <property type="entry name" value="Isoleucine--tRNA ligase"/>
    <property type="match status" value="1"/>
</dbReference>
<dbReference type="FunFam" id="3.40.50.620:FF:000048">
    <property type="entry name" value="Isoleucine--tRNA ligase"/>
    <property type="match status" value="1"/>
</dbReference>
<dbReference type="FunFam" id="3.40.50.620:FF:000168">
    <property type="entry name" value="Isoleucine--tRNA ligase"/>
    <property type="match status" value="1"/>
</dbReference>
<dbReference type="Gene3D" id="1.10.730.20">
    <property type="match status" value="1"/>
</dbReference>
<dbReference type="Gene3D" id="3.40.50.620">
    <property type="entry name" value="HUPs"/>
    <property type="match status" value="2"/>
</dbReference>
<dbReference type="Gene3D" id="3.90.740.10">
    <property type="entry name" value="Valyl/Leucyl/Isoleucyl-tRNA synthetase, editing domain"/>
    <property type="match status" value="1"/>
</dbReference>
<dbReference type="HAMAP" id="MF_02002">
    <property type="entry name" value="Ile_tRNA_synth_type1"/>
    <property type="match status" value="1"/>
</dbReference>
<dbReference type="InterPro" id="IPR001412">
    <property type="entry name" value="aa-tRNA-synth_I_CS"/>
</dbReference>
<dbReference type="InterPro" id="IPR002300">
    <property type="entry name" value="aa-tRNA-synth_Ia"/>
</dbReference>
<dbReference type="InterPro" id="IPR033708">
    <property type="entry name" value="Anticodon_Ile_BEm"/>
</dbReference>
<dbReference type="InterPro" id="IPR002301">
    <property type="entry name" value="Ile-tRNA-ligase"/>
</dbReference>
<dbReference type="InterPro" id="IPR023585">
    <property type="entry name" value="Ile-tRNA-ligase_type1"/>
</dbReference>
<dbReference type="InterPro" id="IPR050081">
    <property type="entry name" value="Ile-tRNA_ligase"/>
</dbReference>
<dbReference type="InterPro" id="IPR013155">
    <property type="entry name" value="M/V/L/I-tRNA-synth_anticd-bd"/>
</dbReference>
<dbReference type="InterPro" id="IPR014729">
    <property type="entry name" value="Rossmann-like_a/b/a_fold"/>
</dbReference>
<dbReference type="InterPro" id="IPR009080">
    <property type="entry name" value="tRNAsynth_Ia_anticodon-bd"/>
</dbReference>
<dbReference type="InterPro" id="IPR009008">
    <property type="entry name" value="Val/Leu/Ile-tRNA-synth_edit"/>
</dbReference>
<dbReference type="InterPro" id="IPR010663">
    <property type="entry name" value="Znf_FPG/IleRS"/>
</dbReference>
<dbReference type="NCBIfam" id="TIGR00392">
    <property type="entry name" value="ileS"/>
    <property type="match status" value="1"/>
</dbReference>
<dbReference type="PANTHER" id="PTHR42765:SF1">
    <property type="entry name" value="ISOLEUCINE--TRNA LIGASE, MITOCHONDRIAL"/>
    <property type="match status" value="1"/>
</dbReference>
<dbReference type="PANTHER" id="PTHR42765">
    <property type="entry name" value="SOLEUCYL-TRNA SYNTHETASE"/>
    <property type="match status" value="1"/>
</dbReference>
<dbReference type="Pfam" id="PF08264">
    <property type="entry name" value="Anticodon_1"/>
    <property type="match status" value="1"/>
</dbReference>
<dbReference type="Pfam" id="PF00133">
    <property type="entry name" value="tRNA-synt_1"/>
    <property type="match status" value="1"/>
</dbReference>
<dbReference type="Pfam" id="PF06827">
    <property type="entry name" value="zf-FPG_IleRS"/>
    <property type="match status" value="1"/>
</dbReference>
<dbReference type="PRINTS" id="PR00984">
    <property type="entry name" value="TRNASYNTHILE"/>
</dbReference>
<dbReference type="SUPFAM" id="SSF47323">
    <property type="entry name" value="Anticodon-binding domain of a subclass of class I aminoacyl-tRNA synthetases"/>
    <property type="match status" value="1"/>
</dbReference>
<dbReference type="SUPFAM" id="SSF52374">
    <property type="entry name" value="Nucleotidylyl transferase"/>
    <property type="match status" value="1"/>
</dbReference>
<dbReference type="SUPFAM" id="SSF50677">
    <property type="entry name" value="ValRS/IleRS/LeuRS editing domain"/>
    <property type="match status" value="1"/>
</dbReference>
<dbReference type="PROSITE" id="PS00178">
    <property type="entry name" value="AA_TRNA_LIGASE_I"/>
    <property type="match status" value="1"/>
</dbReference>
<gene>
    <name evidence="1" type="primary">ileS</name>
    <name type="ordered locus">VFMJ11_0466</name>
</gene>
<keyword id="KW-0030">Aminoacyl-tRNA synthetase</keyword>
<keyword id="KW-0067">ATP-binding</keyword>
<keyword id="KW-0963">Cytoplasm</keyword>
<keyword id="KW-0436">Ligase</keyword>
<keyword id="KW-0479">Metal-binding</keyword>
<keyword id="KW-0547">Nucleotide-binding</keyword>
<keyword id="KW-0648">Protein biosynthesis</keyword>
<keyword id="KW-0862">Zinc</keyword>
<organism>
    <name type="scientific">Aliivibrio fischeri (strain MJ11)</name>
    <name type="common">Vibrio fischeri</name>
    <dbReference type="NCBI Taxonomy" id="388396"/>
    <lineage>
        <taxon>Bacteria</taxon>
        <taxon>Pseudomonadati</taxon>
        <taxon>Pseudomonadota</taxon>
        <taxon>Gammaproteobacteria</taxon>
        <taxon>Vibrionales</taxon>
        <taxon>Vibrionaceae</taxon>
        <taxon>Aliivibrio</taxon>
    </lineage>
</organism>
<name>SYI_ALIFM</name>
<accession>B5FA60</accession>
<sequence length="952" mass="106918">MSDYKDTLNLPETGFPMRGNLANREPEMLKRWYDEDLYGEIRKAKKGKKSFVLHDGPPYANGDIHIGHALNKILKDIIIKSKTLSGFDAPYVPGWDCHGLPIELMVEKKKGKPGQKISAAEFREECRKYAAGQVEGQKESFKRLGVMGEWDKPYRTMDFGTEANIIRSLGKIADQGHLLKGFKPVHWCTDCGSALAEAEVEYQDKVSPSIDVRFVAADEAATLAKFSTPEGHQGEGELSVVIWTTTPWTLPANRAVALHADLEYVLVQVEAHGEQKAQRLILASELAKSVLDRANIEHYHNLGFAKGSDLELLQFNHPFYNFTVPAILGEHVTTDSGTGIVHTAPGHGQEDFVVGKKYDLEIANPVGSNGVYLPDTELFAGQHVFKANDSVLEVLKEKGALLHHHAYEHSYPHCWRHKTPIIFRATPQWFISMDQAGLRAKALEEVKSVEWMPEWGQNRIEGMIEGRPEWCISRQRTWGVPIALFVHKETAELHPDSLELIEKVAKLVEEKGIQAWWDVDAAELMGEEDAANYEKVLDTLDVWFDSGVTHFSVVDSREEYNFPEEERTHSADLYLEGSDQHRGWFQSSLISSVAMKGKAPYRQVLTHGFVVDGNGRKMSKSIGNVVAPKDVTNKLGADILRLWVASTDYTNEVAVSDEILKRSADAYRRIRNTARFFLANLSGFNPATDIVPAEEMVALDRWAVGRAFAAQQEIIKSYDEYNLHEVTQRLMHFCSIEMGSFYLDVIKDRQYTAKKGGHAQRSCQTALYYIVEALVRWMAPIMSFTADEIWNEMPGEREKFVFTGEWYQGLFDLAEGEEFNNEFWTDIQAVRASVNKLLEAARGEKVIGGALQAEVTLYADDALIAKINKLEDELRFVLLTSAATVKPLSEKTESAKATELDGLFVDVVASEAAKCERCWHHVADVGTIEGHEEVCGRCVSNIDGEGEERKFA</sequence>